<comment type="function">
    <text evidence="1">An aminoacyl-tRNA editing enzyme that deacylates mischarged D-aminoacyl-tRNAs. Also deacylates mischarged glycyl-tRNA(Ala), protecting cells against glycine mischarging by AlaRS. Acts via tRNA-based rather than protein-based catalysis; rejects L-amino acids rather than detecting D-amino acids in the active site. By recycling D-aminoacyl-tRNA to D-amino acids and free tRNA molecules, this enzyme counteracts the toxicity associated with the formation of D-aminoacyl-tRNA entities in vivo and helps enforce protein L-homochirality.</text>
</comment>
<comment type="catalytic activity">
    <reaction evidence="1">
        <text>glycyl-tRNA(Ala) + H2O = tRNA(Ala) + glycine + H(+)</text>
        <dbReference type="Rhea" id="RHEA:53744"/>
        <dbReference type="Rhea" id="RHEA-COMP:9657"/>
        <dbReference type="Rhea" id="RHEA-COMP:13640"/>
        <dbReference type="ChEBI" id="CHEBI:15377"/>
        <dbReference type="ChEBI" id="CHEBI:15378"/>
        <dbReference type="ChEBI" id="CHEBI:57305"/>
        <dbReference type="ChEBI" id="CHEBI:78442"/>
        <dbReference type="ChEBI" id="CHEBI:78522"/>
        <dbReference type="EC" id="3.1.1.96"/>
    </reaction>
</comment>
<comment type="catalytic activity">
    <reaction evidence="1">
        <text>a D-aminoacyl-tRNA + H2O = a tRNA + a D-alpha-amino acid + H(+)</text>
        <dbReference type="Rhea" id="RHEA:13953"/>
        <dbReference type="Rhea" id="RHEA-COMP:10123"/>
        <dbReference type="Rhea" id="RHEA-COMP:10124"/>
        <dbReference type="ChEBI" id="CHEBI:15377"/>
        <dbReference type="ChEBI" id="CHEBI:15378"/>
        <dbReference type="ChEBI" id="CHEBI:59871"/>
        <dbReference type="ChEBI" id="CHEBI:78442"/>
        <dbReference type="ChEBI" id="CHEBI:79333"/>
        <dbReference type="EC" id="3.1.1.96"/>
    </reaction>
</comment>
<comment type="subunit">
    <text evidence="1">Homodimer.</text>
</comment>
<comment type="subcellular location">
    <subcellularLocation>
        <location evidence="1">Cytoplasm</location>
    </subcellularLocation>
</comment>
<comment type="domain">
    <text evidence="1">A Gly-cisPro motif from one monomer fits into the active site of the other monomer to allow specific chiral rejection of L-amino acids.</text>
</comment>
<comment type="similarity">
    <text evidence="1">Belongs to the DTD family.</text>
</comment>
<protein>
    <recommendedName>
        <fullName evidence="1">D-aminoacyl-tRNA deacylase</fullName>
        <shortName evidence="1">DTD</shortName>
        <ecNumber evidence="1">3.1.1.96</ecNumber>
    </recommendedName>
    <alternativeName>
        <fullName evidence="1">Gly-tRNA(Ala) deacylase</fullName>
    </alternativeName>
</protein>
<evidence type="ECO:0000255" key="1">
    <source>
        <dbReference type="HAMAP-Rule" id="MF_00518"/>
    </source>
</evidence>
<feature type="chain" id="PRO_1000146184" description="D-aminoacyl-tRNA deacylase">
    <location>
        <begin position="1"/>
        <end position="159"/>
    </location>
</feature>
<feature type="short sequence motif" description="Gly-cisPro motif, important for rejection of L-amino acids" evidence="1">
    <location>
        <begin position="146"/>
        <end position="147"/>
    </location>
</feature>
<proteinExistence type="inferred from homology"/>
<sequence>MRIVLQKVSHAGVTVTDEAIGELDTTFTEQTIAAGYVLLVGVSDADGTRQIDWLAHKISNLRVFEDEQGKMNLSIHDVGGSILSISQFTLFADTRKGNRPSFVRAGKPEHAERVWLEFNEALRAQGLQVKEGRFGAHMNVSLVNDGPVTILFDTEELGI</sequence>
<name>DTD_BIFA0</name>
<dbReference type="EC" id="3.1.1.96" evidence="1"/>
<dbReference type="EMBL" id="CP001213">
    <property type="protein sequence ID" value="ACL29050.1"/>
    <property type="molecule type" value="Genomic_DNA"/>
</dbReference>
<dbReference type="RefSeq" id="WP_004218676.1">
    <property type="nucleotide sequence ID" value="NC_011835.1"/>
</dbReference>
<dbReference type="SMR" id="B8DSS1"/>
<dbReference type="STRING" id="442563.BLA_0757"/>
<dbReference type="GeneID" id="29695158"/>
<dbReference type="KEGG" id="bla:BLA_0757"/>
<dbReference type="HOGENOM" id="CLU_076901_1_0_11"/>
<dbReference type="Proteomes" id="UP000002456">
    <property type="component" value="Chromosome"/>
</dbReference>
<dbReference type="GO" id="GO:0005737">
    <property type="term" value="C:cytoplasm"/>
    <property type="evidence" value="ECO:0007669"/>
    <property type="project" value="UniProtKB-SubCell"/>
</dbReference>
<dbReference type="GO" id="GO:0051500">
    <property type="term" value="F:D-tyrosyl-tRNA(Tyr) deacylase activity"/>
    <property type="evidence" value="ECO:0007669"/>
    <property type="project" value="TreeGrafter"/>
</dbReference>
<dbReference type="GO" id="GO:0106026">
    <property type="term" value="F:Gly-tRNA(Ala) deacylase activity"/>
    <property type="evidence" value="ECO:0007669"/>
    <property type="project" value="UniProtKB-UniRule"/>
</dbReference>
<dbReference type="GO" id="GO:0043908">
    <property type="term" value="F:Ser(Gly)-tRNA(Ala) hydrolase activity"/>
    <property type="evidence" value="ECO:0007669"/>
    <property type="project" value="UniProtKB-UniRule"/>
</dbReference>
<dbReference type="GO" id="GO:0000049">
    <property type="term" value="F:tRNA binding"/>
    <property type="evidence" value="ECO:0007669"/>
    <property type="project" value="UniProtKB-UniRule"/>
</dbReference>
<dbReference type="GO" id="GO:0019478">
    <property type="term" value="P:D-amino acid catabolic process"/>
    <property type="evidence" value="ECO:0007669"/>
    <property type="project" value="UniProtKB-UniRule"/>
</dbReference>
<dbReference type="CDD" id="cd00563">
    <property type="entry name" value="Dtyr_deacylase"/>
    <property type="match status" value="1"/>
</dbReference>
<dbReference type="FunFam" id="3.50.80.10:FF:000001">
    <property type="entry name" value="D-aminoacyl-tRNA deacylase"/>
    <property type="match status" value="1"/>
</dbReference>
<dbReference type="Gene3D" id="3.50.80.10">
    <property type="entry name" value="D-tyrosyl-tRNA(Tyr) deacylase"/>
    <property type="match status" value="1"/>
</dbReference>
<dbReference type="HAMAP" id="MF_00518">
    <property type="entry name" value="Deacylase_Dtd"/>
    <property type="match status" value="1"/>
</dbReference>
<dbReference type="InterPro" id="IPR003732">
    <property type="entry name" value="Daa-tRNA_deacyls_DTD"/>
</dbReference>
<dbReference type="InterPro" id="IPR023509">
    <property type="entry name" value="DTD-like_sf"/>
</dbReference>
<dbReference type="NCBIfam" id="TIGR00256">
    <property type="entry name" value="D-aminoacyl-tRNA deacylase"/>
    <property type="match status" value="1"/>
</dbReference>
<dbReference type="PANTHER" id="PTHR10472:SF5">
    <property type="entry name" value="D-AMINOACYL-TRNA DEACYLASE 1"/>
    <property type="match status" value="1"/>
</dbReference>
<dbReference type="PANTHER" id="PTHR10472">
    <property type="entry name" value="D-TYROSYL-TRNA TYR DEACYLASE"/>
    <property type="match status" value="1"/>
</dbReference>
<dbReference type="Pfam" id="PF02580">
    <property type="entry name" value="Tyr_Deacylase"/>
    <property type="match status" value="1"/>
</dbReference>
<dbReference type="SUPFAM" id="SSF69500">
    <property type="entry name" value="DTD-like"/>
    <property type="match status" value="1"/>
</dbReference>
<accession>B8DSS1</accession>
<reference key="1">
    <citation type="journal article" date="2009" name="J. Bacteriol.">
        <title>Genome sequence of the probiotic bacterium Bifidobacterium animalis subsp. lactis AD011.</title>
        <authorList>
            <person name="Kim J.F."/>
            <person name="Jeong H."/>
            <person name="Yu D.S."/>
            <person name="Choi S.-H."/>
            <person name="Hur C.-G."/>
            <person name="Park M.-S."/>
            <person name="Yoon S.H."/>
            <person name="Kim D.-W."/>
            <person name="Ji G.E."/>
            <person name="Park H.-S."/>
            <person name="Oh T.K."/>
        </authorList>
    </citation>
    <scope>NUCLEOTIDE SEQUENCE [LARGE SCALE GENOMIC DNA]</scope>
    <source>
        <strain>AD011</strain>
    </source>
</reference>
<organism>
    <name type="scientific">Bifidobacterium animalis subsp. lactis (strain AD011)</name>
    <dbReference type="NCBI Taxonomy" id="442563"/>
    <lineage>
        <taxon>Bacteria</taxon>
        <taxon>Bacillati</taxon>
        <taxon>Actinomycetota</taxon>
        <taxon>Actinomycetes</taxon>
        <taxon>Bifidobacteriales</taxon>
        <taxon>Bifidobacteriaceae</taxon>
        <taxon>Bifidobacterium</taxon>
    </lineage>
</organism>
<keyword id="KW-0963">Cytoplasm</keyword>
<keyword id="KW-0378">Hydrolase</keyword>
<keyword id="KW-1185">Reference proteome</keyword>
<keyword id="KW-0694">RNA-binding</keyword>
<keyword id="KW-0820">tRNA-binding</keyword>
<gene>
    <name evidence="1" type="primary">dtd</name>
    <name type="ordered locus">BLA_0757</name>
</gene>